<sequence length="401" mass="43851">MGRAKKVVLAYSGGVDTSVCIPYLKQEWGVEEVITFAADLGQGDELEPIRRKALEAGASQSLVGDLIQPFIEEFAFPAIRANALYEGRYPLSTALARPLIARRLVEVAREVGADAVAHGCTGKGNDQVRFDVAIAALAPDLKVLTPAREWGMSREETIAYGERCGLPAPVSKKSPYSIDLNLLGRSVEAGPLEDPMQAPPEEVFAMTVSIDAAPSEAEEIEIAFEAGNPVSINGQRLDPVALIREANRLAGSHGIGRLDMIENRVVGIKSREIYETPGLLLLIQAHQELESLTLAADVLRTKRQLEMQWADLVYQGLWFGPLKEALDGFMDRTQSEVNGVVRLRLHKGNAIVTGRGSSDSSLYVPEMASYGSEDQFDHRAAEGFIYVWGLPIRLWSAARRR</sequence>
<name>ASSY_SYNPW</name>
<evidence type="ECO:0000255" key="1">
    <source>
        <dbReference type="HAMAP-Rule" id="MF_00005"/>
    </source>
</evidence>
<protein>
    <recommendedName>
        <fullName evidence="1">Argininosuccinate synthase</fullName>
        <ecNumber evidence="1">6.3.4.5</ecNumber>
    </recommendedName>
    <alternativeName>
        <fullName evidence="1">Citrulline--aspartate ligase</fullName>
    </alternativeName>
</protein>
<organism>
    <name type="scientific">Synechococcus sp. (strain WH7803)</name>
    <dbReference type="NCBI Taxonomy" id="32051"/>
    <lineage>
        <taxon>Bacteria</taxon>
        <taxon>Bacillati</taxon>
        <taxon>Cyanobacteriota</taxon>
        <taxon>Cyanophyceae</taxon>
        <taxon>Synechococcales</taxon>
        <taxon>Synechococcaceae</taxon>
        <taxon>Synechococcus</taxon>
    </lineage>
</organism>
<reference key="1">
    <citation type="submission" date="2006-05" db="EMBL/GenBank/DDBJ databases">
        <authorList>
            <consortium name="Genoscope"/>
        </authorList>
    </citation>
    <scope>NUCLEOTIDE SEQUENCE [LARGE SCALE GENOMIC DNA]</scope>
    <source>
        <strain>WH7803</strain>
    </source>
</reference>
<dbReference type="EC" id="6.3.4.5" evidence="1"/>
<dbReference type="EMBL" id="CT971583">
    <property type="protein sequence ID" value="CAK24945.1"/>
    <property type="molecule type" value="Genomic_DNA"/>
</dbReference>
<dbReference type="SMR" id="A5GPT0"/>
<dbReference type="STRING" id="32051.SynWH7803_2519"/>
<dbReference type="KEGG" id="syx:SynWH7803_2519"/>
<dbReference type="eggNOG" id="COG0137">
    <property type="taxonomic scope" value="Bacteria"/>
</dbReference>
<dbReference type="HOGENOM" id="CLU_032784_4_2_3"/>
<dbReference type="OrthoDB" id="9801641at2"/>
<dbReference type="UniPathway" id="UPA00068">
    <property type="reaction ID" value="UER00113"/>
</dbReference>
<dbReference type="Proteomes" id="UP000001566">
    <property type="component" value="Chromosome"/>
</dbReference>
<dbReference type="GO" id="GO:0005737">
    <property type="term" value="C:cytoplasm"/>
    <property type="evidence" value="ECO:0007669"/>
    <property type="project" value="UniProtKB-SubCell"/>
</dbReference>
<dbReference type="GO" id="GO:0004055">
    <property type="term" value="F:argininosuccinate synthase activity"/>
    <property type="evidence" value="ECO:0007669"/>
    <property type="project" value="UniProtKB-UniRule"/>
</dbReference>
<dbReference type="GO" id="GO:0005524">
    <property type="term" value="F:ATP binding"/>
    <property type="evidence" value="ECO:0007669"/>
    <property type="project" value="UniProtKB-UniRule"/>
</dbReference>
<dbReference type="GO" id="GO:0000053">
    <property type="term" value="P:argininosuccinate metabolic process"/>
    <property type="evidence" value="ECO:0007669"/>
    <property type="project" value="TreeGrafter"/>
</dbReference>
<dbReference type="GO" id="GO:0006526">
    <property type="term" value="P:L-arginine biosynthetic process"/>
    <property type="evidence" value="ECO:0007669"/>
    <property type="project" value="UniProtKB-UniRule"/>
</dbReference>
<dbReference type="GO" id="GO:0000050">
    <property type="term" value="P:urea cycle"/>
    <property type="evidence" value="ECO:0007669"/>
    <property type="project" value="TreeGrafter"/>
</dbReference>
<dbReference type="CDD" id="cd01999">
    <property type="entry name" value="ASS"/>
    <property type="match status" value="1"/>
</dbReference>
<dbReference type="FunFam" id="3.40.50.620:FF:000019">
    <property type="entry name" value="Argininosuccinate synthase"/>
    <property type="match status" value="1"/>
</dbReference>
<dbReference type="FunFam" id="3.90.1260.10:FF:000007">
    <property type="entry name" value="Argininosuccinate synthase"/>
    <property type="match status" value="1"/>
</dbReference>
<dbReference type="Gene3D" id="3.90.1260.10">
    <property type="entry name" value="Argininosuccinate synthetase, chain A, domain 2"/>
    <property type="match status" value="1"/>
</dbReference>
<dbReference type="Gene3D" id="3.40.50.620">
    <property type="entry name" value="HUPs"/>
    <property type="match status" value="1"/>
</dbReference>
<dbReference type="Gene3D" id="1.20.5.470">
    <property type="entry name" value="Single helix bin"/>
    <property type="match status" value="1"/>
</dbReference>
<dbReference type="HAMAP" id="MF_00005">
    <property type="entry name" value="Arg_succ_synth_type1"/>
    <property type="match status" value="1"/>
</dbReference>
<dbReference type="InterPro" id="IPR048268">
    <property type="entry name" value="Arginosuc_syn_C"/>
</dbReference>
<dbReference type="InterPro" id="IPR048267">
    <property type="entry name" value="Arginosuc_syn_N"/>
</dbReference>
<dbReference type="InterPro" id="IPR001518">
    <property type="entry name" value="Arginosuc_synth"/>
</dbReference>
<dbReference type="InterPro" id="IPR018223">
    <property type="entry name" value="Arginosuc_synth_CS"/>
</dbReference>
<dbReference type="InterPro" id="IPR023434">
    <property type="entry name" value="Arginosuc_synth_type_1_subfam"/>
</dbReference>
<dbReference type="InterPro" id="IPR024074">
    <property type="entry name" value="AS_cat/multimer_dom_body"/>
</dbReference>
<dbReference type="InterPro" id="IPR014729">
    <property type="entry name" value="Rossmann-like_a/b/a_fold"/>
</dbReference>
<dbReference type="NCBIfam" id="TIGR00032">
    <property type="entry name" value="argG"/>
    <property type="match status" value="1"/>
</dbReference>
<dbReference type="NCBIfam" id="NF001770">
    <property type="entry name" value="PRK00509.1"/>
    <property type="match status" value="1"/>
</dbReference>
<dbReference type="PANTHER" id="PTHR11587">
    <property type="entry name" value="ARGININOSUCCINATE SYNTHASE"/>
    <property type="match status" value="1"/>
</dbReference>
<dbReference type="PANTHER" id="PTHR11587:SF2">
    <property type="entry name" value="ARGININOSUCCINATE SYNTHASE"/>
    <property type="match status" value="1"/>
</dbReference>
<dbReference type="Pfam" id="PF20979">
    <property type="entry name" value="Arginosuc_syn_C"/>
    <property type="match status" value="1"/>
</dbReference>
<dbReference type="Pfam" id="PF00764">
    <property type="entry name" value="Arginosuc_synth"/>
    <property type="match status" value="1"/>
</dbReference>
<dbReference type="SUPFAM" id="SSF52402">
    <property type="entry name" value="Adenine nucleotide alpha hydrolases-like"/>
    <property type="match status" value="1"/>
</dbReference>
<dbReference type="SUPFAM" id="SSF69864">
    <property type="entry name" value="Argininosuccinate synthetase, C-terminal domain"/>
    <property type="match status" value="1"/>
</dbReference>
<dbReference type="PROSITE" id="PS00564">
    <property type="entry name" value="ARGININOSUCCIN_SYN_1"/>
    <property type="match status" value="1"/>
</dbReference>
<dbReference type="PROSITE" id="PS00565">
    <property type="entry name" value="ARGININOSUCCIN_SYN_2"/>
    <property type="match status" value="1"/>
</dbReference>
<keyword id="KW-0028">Amino-acid biosynthesis</keyword>
<keyword id="KW-0055">Arginine biosynthesis</keyword>
<keyword id="KW-0067">ATP-binding</keyword>
<keyword id="KW-0963">Cytoplasm</keyword>
<keyword id="KW-0436">Ligase</keyword>
<keyword id="KW-0547">Nucleotide-binding</keyword>
<keyword id="KW-1185">Reference proteome</keyword>
<gene>
    <name evidence="1" type="primary">argG</name>
    <name type="ordered locus">SynWH7803_2519</name>
</gene>
<comment type="catalytic activity">
    <reaction evidence="1">
        <text>L-citrulline + L-aspartate + ATP = 2-(N(omega)-L-arginino)succinate + AMP + diphosphate + H(+)</text>
        <dbReference type="Rhea" id="RHEA:10932"/>
        <dbReference type="ChEBI" id="CHEBI:15378"/>
        <dbReference type="ChEBI" id="CHEBI:29991"/>
        <dbReference type="ChEBI" id="CHEBI:30616"/>
        <dbReference type="ChEBI" id="CHEBI:33019"/>
        <dbReference type="ChEBI" id="CHEBI:57472"/>
        <dbReference type="ChEBI" id="CHEBI:57743"/>
        <dbReference type="ChEBI" id="CHEBI:456215"/>
        <dbReference type="EC" id="6.3.4.5"/>
    </reaction>
</comment>
<comment type="pathway">
    <text evidence="1">Amino-acid biosynthesis; L-arginine biosynthesis; L-arginine from L-ornithine and carbamoyl phosphate: step 2/3.</text>
</comment>
<comment type="subunit">
    <text evidence="1">Homotetramer.</text>
</comment>
<comment type="subcellular location">
    <subcellularLocation>
        <location evidence="1">Cytoplasm</location>
    </subcellularLocation>
</comment>
<comment type="similarity">
    <text evidence="1">Belongs to the argininosuccinate synthase family. Type 1 subfamily.</text>
</comment>
<feature type="chain" id="PRO_1000000444" description="Argininosuccinate synthase">
    <location>
        <begin position="1"/>
        <end position="401"/>
    </location>
</feature>
<feature type="binding site" evidence="1">
    <location>
        <begin position="10"/>
        <end position="18"/>
    </location>
    <ligand>
        <name>ATP</name>
        <dbReference type="ChEBI" id="CHEBI:30616"/>
    </ligand>
</feature>
<feature type="binding site" evidence="1">
    <location>
        <position position="38"/>
    </location>
    <ligand>
        <name>ATP</name>
        <dbReference type="ChEBI" id="CHEBI:30616"/>
    </ligand>
</feature>
<feature type="binding site" evidence="1">
    <location>
        <position position="89"/>
    </location>
    <ligand>
        <name>L-citrulline</name>
        <dbReference type="ChEBI" id="CHEBI:57743"/>
    </ligand>
</feature>
<feature type="binding site" evidence="1">
    <location>
        <position position="119"/>
    </location>
    <ligand>
        <name>ATP</name>
        <dbReference type="ChEBI" id="CHEBI:30616"/>
    </ligand>
</feature>
<feature type="binding site" evidence="1">
    <location>
        <position position="121"/>
    </location>
    <ligand>
        <name>L-aspartate</name>
        <dbReference type="ChEBI" id="CHEBI:29991"/>
    </ligand>
</feature>
<feature type="binding site" evidence="1">
    <location>
        <position position="125"/>
    </location>
    <ligand>
        <name>L-aspartate</name>
        <dbReference type="ChEBI" id="CHEBI:29991"/>
    </ligand>
</feature>
<feature type="binding site" evidence="1">
    <location>
        <position position="125"/>
    </location>
    <ligand>
        <name>L-citrulline</name>
        <dbReference type="ChEBI" id="CHEBI:57743"/>
    </ligand>
</feature>
<feature type="binding site" evidence="1">
    <location>
        <position position="126"/>
    </location>
    <ligand>
        <name>L-aspartate</name>
        <dbReference type="ChEBI" id="CHEBI:29991"/>
    </ligand>
</feature>
<feature type="binding site" evidence="1">
    <location>
        <position position="129"/>
    </location>
    <ligand>
        <name>L-citrulline</name>
        <dbReference type="ChEBI" id="CHEBI:57743"/>
    </ligand>
</feature>
<feature type="binding site" evidence="1">
    <location>
        <position position="177"/>
    </location>
    <ligand>
        <name>L-citrulline</name>
        <dbReference type="ChEBI" id="CHEBI:57743"/>
    </ligand>
</feature>
<feature type="binding site" evidence="1">
    <location>
        <position position="186"/>
    </location>
    <ligand>
        <name>L-citrulline</name>
        <dbReference type="ChEBI" id="CHEBI:57743"/>
    </ligand>
</feature>
<feature type="binding site" evidence="1">
    <location>
        <position position="262"/>
    </location>
    <ligand>
        <name>L-citrulline</name>
        <dbReference type="ChEBI" id="CHEBI:57743"/>
    </ligand>
</feature>
<feature type="binding site" evidence="1">
    <location>
        <position position="274"/>
    </location>
    <ligand>
        <name>L-citrulline</name>
        <dbReference type="ChEBI" id="CHEBI:57743"/>
    </ligand>
</feature>
<proteinExistence type="inferred from homology"/>
<accession>A5GPT0</accession>